<dbReference type="EC" id="1.8.4.11"/>
<dbReference type="EMBL" id="AE005673">
    <property type="protein sequence ID" value="AAK22978.1"/>
    <property type="molecule type" value="Genomic_DNA"/>
</dbReference>
<dbReference type="PIR" id="F87372">
    <property type="entry name" value="F87372"/>
</dbReference>
<dbReference type="RefSeq" id="NP_419810.1">
    <property type="nucleotide sequence ID" value="NC_002696.2"/>
</dbReference>
<dbReference type="RefSeq" id="WP_010918878.1">
    <property type="nucleotide sequence ID" value="NC_002696.2"/>
</dbReference>
<dbReference type="SMR" id="Q9A9I6"/>
<dbReference type="STRING" id="190650.CC_0994"/>
<dbReference type="EnsemblBacteria" id="AAK22978">
    <property type="protein sequence ID" value="AAK22978"/>
    <property type="gene ID" value="CC_0994"/>
</dbReference>
<dbReference type="KEGG" id="ccr:CC_0994"/>
<dbReference type="PATRIC" id="fig|190650.5.peg.1013"/>
<dbReference type="eggNOG" id="COG0225">
    <property type="taxonomic scope" value="Bacteria"/>
</dbReference>
<dbReference type="HOGENOM" id="CLU_031040_10_3_5"/>
<dbReference type="BioCyc" id="CAULO:CC0994-MONOMER"/>
<dbReference type="Proteomes" id="UP000001816">
    <property type="component" value="Chromosome"/>
</dbReference>
<dbReference type="GO" id="GO:0005737">
    <property type="term" value="C:cytoplasm"/>
    <property type="evidence" value="ECO:0007669"/>
    <property type="project" value="TreeGrafter"/>
</dbReference>
<dbReference type="GO" id="GO:0036456">
    <property type="term" value="F:L-methionine-(S)-S-oxide reductase activity"/>
    <property type="evidence" value="ECO:0007669"/>
    <property type="project" value="TreeGrafter"/>
</dbReference>
<dbReference type="GO" id="GO:0008113">
    <property type="term" value="F:peptide-methionine (S)-S-oxide reductase activity"/>
    <property type="evidence" value="ECO:0007669"/>
    <property type="project" value="UniProtKB-UniRule"/>
</dbReference>
<dbReference type="GO" id="GO:0034599">
    <property type="term" value="P:cellular response to oxidative stress"/>
    <property type="evidence" value="ECO:0007669"/>
    <property type="project" value="TreeGrafter"/>
</dbReference>
<dbReference type="GO" id="GO:0036211">
    <property type="term" value="P:protein modification process"/>
    <property type="evidence" value="ECO:0007669"/>
    <property type="project" value="UniProtKB-UniRule"/>
</dbReference>
<dbReference type="FunFam" id="3.30.1060.10:FF:000001">
    <property type="entry name" value="Peptide methionine sulfoxide reductase MsrA"/>
    <property type="match status" value="1"/>
</dbReference>
<dbReference type="Gene3D" id="3.30.1060.10">
    <property type="entry name" value="Peptide methionine sulphoxide reductase MsrA"/>
    <property type="match status" value="1"/>
</dbReference>
<dbReference type="HAMAP" id="MF_01401">
    <property type="entry name" value="MsrA"/>
    <property type="match status" value="1"/>
</dbReference>
<dbReference type="InterPro" id="IPR002569">
    <property type="entry name" value="Met_Sox_Rdtase_MsrA_dom"/>
</dbReference>
<dbReference type="InterPro" id="IPR036509">
    <property type="entry name" value="Met_Sox_Rdtase_MsrA_sf"/>
</dbReference>
<dbReference type="InterPro" id="IPR050162">
    <property type="entry name" value="MsrA_MetSO_reductase"/>
</dbReference>
<dbReference type="NCBIfam" id="TIGR00401">
    <property type="entry name" value="msrA"/>
    <property type="match status" value="1"/>
</dbReference>
<dbReference type="PANTHER" id="PTHR42799">
    <property type="entry name" value="MITOCHONDRIAL PEPTIDE METHIONINE SULFOXIDE REDUCTASE"/>
    <property type="match status" value="1"/>
</dbReference>
<dbReference type="PANTHER" id="PTHR42799:SF2">
    <property type="entry name" value="MITOCHONDRIAL PEPTIDE METHIONINE SULFOXIDE REDUCTASE"/>
    <property type="match status" value="1"/>
</dbReference>
<dbReference type="Pfam" id="PF01625">
    <property type="entry name" value="PMSR"/>
    <property type="match status" value="1"/>
</dbReference>
<dbReference type="SUPFAM" id="SSF55068">
    <property type="entry name" value="Peptide methionine sulfoxide reductase"/>
    <property type="match status" value="1"/>
</dbReference>
<feature type="chain" id="PRO_0000138536" description="Peptide methionine sulfoxide reductase MsrA 1">
    <location>
        <begin position="1"/>
        <end position="217"/>
    </location>
</feature>
<feature type="active site" evidence="1">
    <location>
        <position position="54"/>
    </location>
</feature>
<evidence type="ECO:0000250" key="1"/>
<evidence type="ECO:0000305" key="2"/>
<reference key="1">
    <citation type="journal article" date="2001" name="Proc. Natl. Acad. Sci. U.S.A.">
        <title>Complete genome sequence of Caulobacter crescentus.</title>
        <authorList>
            <person name="Nierman W.C."/>
            <person name="Feldblyum T.V."/>
            <person name="Laub M.T."/>
            <person name="Paulsen I.T."/>
            <person name="Nelson K.E."/>
            <person name="Eisen J.A."/>
            <person name="Heidelberg J.F."/>
            <person name="Alley M.R.K."/>
            <person name="Ohta N."/>
            <person name="Maddock J.R."/>
            <person name="Potocka I."/>
            <person name="Nelson W.C."/>
            <person name="Newton A."/>
            <person name="Stephens C."/>
            <person name="Phadke N.D."/>
            <person name="Ely B."/>
            <person name="DeBoy R.T."/>
            <person name="Dodson R.J."/>
            <person name="Durkin A.S."/>
            <person name="Gwinn M.L."/>
            <person name="Haft D.H."/>
            <person name="Kolonay J.F."/>
            <person name="Smit J."/>
            <person name="Craven M.B."/>
            <person name="Khouri H.M."/>
            <person name="Shetty J."/>
            <person name="Berry K.J."/>
            <person name="Utterback T.R."/>
            <person name="Tran K."/>
            <person name="Wolf A.M."/>
            <person name="Vamathevan J.J."/>
            <person name="Ermolaeva M.D."/>
            <person name="White O."/>
            <person name="Salzberg S.L."/>
            <person name="Venter J.C."/>
            <person name="Shapiro L."/>
            <person name="Fraser C.M."/>
        </authorList>
    </citation>
    <scope>NUCLEOTIDE SEQUENCE [LARGE SCALE GENOMIC DNA]</scope>
    <source>
        <strain>ATCC 19089 / CIP 103742 / CB 15</strain>
    </source>
</reference>
<protein>
    <recommendedName>
        <fullName>Peptide methionine sulfoxide reductase MsrA 1</fullName>
        <shortName>Protein-methionine-S-oxide reductase 1</shortName>
        <ecNumber>1.8.4.11</ecNumber>
    </recommendedName>
    <alternativeName>
        <fullName>Peptide-methionine (S)-S-oxide reductase 1</fullName>
        <shortName>Peptide Met(O) reductase 1</shortName>
    </alternativeName>
</protein>
<keyword id="KW-0560">Oxidoreductase</keyword>
<keyword id="KW-1185">Reference proteome</keyword>
<accession>Q9A9I6</accession>
<organism>
    <name type="scientific">Caulobacter vibrioides (strain ATCC 19089 / CIP 103742 / CB 15)</name>
    <name type="common">Caulobacter crescentus</name>
    <dbReference type="NCBI Taxonomy" id="190650"/>
    <lineage>
        <taxon>Bacteria</taxon>
        <taxon>Pseudomonadati</taxon>
        <taxon>Pseudomonadota</taxon>
        <taxon>Alphaproteobacteria</taxon>
        <taxon>Caulobacterales</taxon>
        <taxon>Caulobacteraceae</taxon>
        <taxon>Caulobacter</taxon>
    </lineage>
</organism>
<comment type="function">
    <text evidence="1">Has an important function as a repair enzyme for proteins that have been inactivated by oxidation. Catalyzes the reversible oxidation-reduction of methionine sulfoxide in proteins to methionine (By similarity).</text>
</comment>
<comment type="catalytic activity">
    <reaction>
        <text>L-methionyl-[protein] + [thioredoxin]-disulfide + H2O = L-methionyl-(S)-S-oxide-[protein] + [thioredoxin]-dithiol</text>
        <dbReference type="Rhea" id="RHEA:14217"/>
        <dbReference type="Rhea" id="RHEA-COMP:10698"/>
        <dbReference type="Rhea" id="RHEA-COMP:10700"/>
        <dbReference type="Rhea" id="RHEA-COMP:12313"/>
        <dbReference type="Rhea" id="RHEA-COMP:12315"/>
        <dbReference type="ChEBI" id="CHEBI:15377"/>
        <dbReference type="ChEBI" id="CHEBI:16044"/>
        <dbReference type="ChEBI" id="CHEBI:29950"/>
        <dbReference type="ChEBI" id="CHEBI:44120"/>
        <dbReference type="ChEBI" id="CHEBI:50058"/>
        <dbReference type="EC" id="1.8.4.11"/>
    </reaction>
</comment>
<comment type="catalytic activity">
    <reaction>
        <text>[thioredoxin]-disulfide + L-methionine + H2O = L-methionine (S)-S-oxide + [thioredoxin]-dithiol</text>
        <dbReference type="Rhea" id="RHEA:19993"/>
        <dbReference type="Rhea" id="RHEA-COMP:10698"/>
        <dbReference type="Rhea" id="RHEA-COMP:10700"/>
        <dbReference type="ChEBI" id="CHEBI:15377"/>
        <dbReference type="ChEBI" id="CHEBI:29950"/>
        <dbReference type="ChEBI" id="CHEBI:50058"/>
        <dbReference type="ChEBI" id="CHEBI:57844"/>
        <dbReference type="ChEBI" id="CHEBI:58772"/>
        <dbReference type="EC" id="1.8.4.11"/>
    </reaction>
</comment>
<comment type="similarity">
    <text evidence="2">Belongs to the MsrA Met sulfoxide reductase family.</text>
</comment>
<sequence length="217" mass="23044">MLSLHKTLEMPSADTALPGRAAPIPTAQTHFVNGHALKGPYPEGLETAIVAMGCFWGVERVFWKVPGVYVTAAGYAAGITPNPTYEEVCTGRTGHTEVVLVVFDPKVVTYEALLKTFWENHDPTQGMRQGNDIGTQYRSGLYVTSDAQAAAAAESKAAYQQALSARGLGTITTEIAPAGPFYFAEDYHQQYLAKNPNGYCGIGGTGVVCPIGLGVEG</sequence>
<name>MSRA1_CAUVC</name>
<proteinExistence type="inferred from homology"/>
<gene>
    <name type="primary">msrA1</name>
    <name type="ordered locus">CC_0994</name>
</gene>